<dbReference type="EC" id="7.1.1.2"/>
<dbReference type="EMBL" id="U82228">
    <property type="protein sequence ID" value="AAC60328.1"/>
    <property type="molecule type" value="Genomic_DNA"/>
</dbReference>
<dbReference type="PIR" id="C58893">
    <property type="entry name" value="C58893"/>
</dbReference>
<dbReference type="RefSeq" id="NP_008339.1">
    <property type="nucleotide sequence ID" value="NC_001804.1"/>
</dbReference>
<dbReference type="SMR" id="O03174"/>
<dbReference type="FunCoup" id="O03174">
    <property type="interactions" value="492"/>
</dbReference>
<dbReference type="STRING" id="7897.ENSLACP00000021815"/>
<dbReference type="Ensembl" id="ENSLACT00000024871.1">
    <property type="protein sequence ID" value="ENSLACP00000021815.1"/>
    <property type="gene ID" value="ENSLACG00000022087.1"/>
</dbReference>
<dbReference type="GeneID" id="808093"/>
<dbReference type="KEGG" id="lcm:808093"/>
<dbReference type="CTD" id="4540"/>
<dbReference type="eggNOG" id="KOG4668">
    <property type="taxonomic scope" value="Eukaryota"/>
</dbReference>
<dbReference type="GeneTree" id="ENSGT00730000111303"/>
<dbReference type="HOGENOM" id="CLU_007100_6_0_1"/>
<dbReference type="InParanoid" id="O03174"/>
<dbReference type="OMA" id="GVGIMSF"/>
<dbReference type="OrthoDB" id="10069788at2759"/>
<dbReference type="TreeFam" id="TF342974"/>
<dbReference type="Proteomes" id="UP000008672">
    <property type="component" value="Mitochondrion"/>
</dbReference>
<dbReference type="Bgee" id="ENSLACG00000022087">
    <property type="expression patterns" value="Expressed in mesonephros and 6 other cell types or tissues"/>
</dbReference>
<dbReference type="GO" id="GO:0005743">
    <property type="term" value="C:mitochondrial inner membrane"/>
    <property type="evidence" value="ECO:0007669"/>
    <property type="project" value="UniProtKB-SubCell"/>
</dbReference>
<dbReference type="GO" id="GO:0008137">
    <property type="term" value="F:NADH dehydrogenase (ubiquinone) activity"/>
    <property type="evidence" value="ECO:0007669"/>
    <property type="project" value="UniProtKB-EC"/>
</dbReference>
<dbReference type="GO" id="GO:0042773">
    <property type="term" value="P:ATP synthesis coupled electron transport"/>
    <property type="evidence" value="ECO:0007669"/>
    <property type="project" value="InterPro"/>
</dbReference>
<dbReference type="GO" id="GO:0015990">
    <property type="term" value="P:electron transport coupled proton transport"/>
    <property type="evidence" value="ECO:0007669"/>
    <property type="project" value="TreeGrafter"/>
</dbReference>
<dbReference type="InterPro" id="IPR010934">
    <property type="entry name" value="NADH_DH_su5_C"/>
</dbReference>
<dbReference type="InterPro" id="IPR018393">
    <property type="entry name" value="NADHpl_OxRdtase_5_subgr"/>
</dbReference>
<dbReference type="InterPro" id="IPR001750">
    <property type="entry name" value="ND/Mrp_TM"/>
</dbReference>
<dbReference type="InterPro" id="IPR003945">
    <property type="entry name" value="NU5C-like"/>
</dbReference>
<dbReference type="InterPro" id="IPR001516">
    <property type="entry name" value="Proton_antipo_N"/>
</dbReference>
<dbReference type="NCBIfam" id="TIGR01974">
    <property type="entry name" value="NDH_I_L"/>
    <property type="match status" value="1"/>
</dbReference>
<dbReference type="PANTHER" id="PTHR42829">
    <property type="entry name" value="NADH-UBIQUINONE OXIDOREDUCTASE CHAIN 5"/>
    <property type="match status" value="1"/>
</dbReference>
<dbReference type="PANTHER" id="PTHR42829:SF2">
    <property type="entry name" value="NADH-UBIQUINONE OXIDOREDUCTASE CHAIN 5"/>
    <property type="match status" value="1"/>
</dbReference>
<dbReference type="Pfam" id="PF06455">
    <property type="entry name" value="NADH5_C"/>
    <property type="match status" value="1"/>
</dbReference>
<dbReference type="Pfam" id="PF00361">
    <property type="entry name" value="Proton_antipo_M"/>
    <property type="match status" value="1"/>
</dbReference>
<dbReference type="Pfam" id="PF00662">
    <property type="entry name" value="Proton_antipo_N"/>
    <property type="match status" value="1"/>
</dbReference>
<dbReference type="PRINTS" id="PR01434">
    <property type="entry name" value="NADHDHGNASE5"/>
</dbReference>
<evidence type="ECO:0000250" key="1"/>
<evidence type="ECO:0000255" key="2"/>
<evidence type="ECO:0000305" key="3"/>
<accession>O03174</accession>
<keyword id="KW-0249">Electron transport</keyword>
<keyword id="KW-0472">Membrane</keyword>
<keyword id="KW-0496">Mitochondrion</keyword>
<keyword id="KW-0999">Mitochondrion inner membrane</keyword>
<keyword id="KW-0520">NAD</keyword>
<keyword id="KW-1185">Reference proteome</keyword>
<keyword id="KW-0679">Respiratory chain</keyword>
<keyword id="KW-1278">Translocase</keyword>
<keyword id="KW-0812">Transmembrane</keyword>
<keyword id="KW-1133">Transmembrane helix</keyword>
<keyword id="KW-0813">Transport</keyword>
<keyword id="KW-0830">Ubiquinone</keyword>
<name>NU5M_LATCH</name>
<protein>
    <recommendedName>
        <fullName>NADH-ubiquinone oxidoreductase chain 5</fullName>
        <ecNumber>7.1.1.2</ecNumber>
    </recommendedName>
    <alternativeName>
        <fullName>NADH dehydrogenase subunit 5</fullName>
    </alternativeName>
</protein>
<feature type="chain" id="PRO_0000118103" description="NADH-ubiquinone oxidoreductase chain 5">
    <location>
        <begin position="1"/>
        <end position="611"/>
    </location>
</feature>
<feature type="transmembrane region" description="Helical" evidence="2">
    <location>
        <begin position="3"/>
        <end position="23"/>
    </location>
</feature>
<feature type="transmembrane region" description="Helical" evidence="2">
    <location>
        <begin position="38"/>
        <end position="58"/>
    </location>
</feature>
<feature type="transmembrane region" description="Helical" evidence="2">
    <location>
        <begin position="91"/>
        <end position="111"/>
    </location>
</feature>
<feature type="transmembrane region" description="Helical" evidence="2">
    <location>
        <begin position="121"/>
        <end position="141"/>
    </location>
</feature>
<feature type="transmembrane region" description="Helical" evidence="2">
    <location>
        <begin position="142"/>
        <end position="162"/>
    </location>
</feature>
<feature type="transmembrane region" description="Helical" evidence="2">
    <location>
        <begin position="175"/>
        <end position="195"/>
    </location>
</feature>
<feature type="transmembrane region" description="Helical" evidence="2">
    <location>
        <begin position="205"/>
        <end position="225"/>
    </location>
</feature>
<feature type="transmembrane region" description="Helical" evidence="2">
    <location>
        <begin position="246"/>
        <end position="266"/>
    </location>
</feature>
<feature type="transmembrane region" description="Helical" evidence="2">
    <location>
        <begin position="277"/>
        <end position="297"/>
    </location>
</feature>
<feature type="transmembrane region" description="Helical" evidence="2">
    <location>
        <begin position="306"/>
        <end position="326"/>
    </location>
</feature>
<feature type="transmembrane region" description="Helical" evidence="2">
    <location>
        <begin position="329"/>
        <end position="349"/>
    </location>
</feature>
<feature type="transmembrane region" description="Helical" evidence="2">
    <location>
        <begin position="375"/>
        <end position="395"/>
    </location>
</feature>
<feature type="transmembrane region" description="Helical" evidence="2">
    <location>
        <begin position="417"/>
        <end position="437"/>
    </location>
</feature>
<feature type="transmembrane region" description="Helical" evidence="2">
    <location>
        <begin position="462"/>
        <end position="482"/>
    </location>
</feature>
<feature type="transmembrane region" description="Helical" evidence="2">
    <location>
        <begin position="493"/>
        <end position="513"/>
    </location>
</feature>
<feature type="transmembrane region" description="Helical" evidence="2">
    <location>
        <begin position="591"/>
        <end position="611"/>
    </location>
</feature>
<proteinExistence type="inferred from homology"/>
<reference key="1">
    <citation type="journal article" date="1997" name="Genetics">
        <title>The complete DNA sequence of the mitochondrial genome of a 'living fossil,' the coelacanth (Latimeria chalumnae).</title>
        <authorList>
            <person name="Zardoya R."/>
            <person name="Meyer A."/>
        </authorList>
    </citation>
    <scope>NUCLEOTIDE SEQUENCE [LARGE SCALE GENOMIC DNA]</scope>
</reference>
<gene>
    <name type="primary">MT-ND5</name>
    <name type="synonym">MTND5</name>
    <name type="synonym">NADH5</name>
    <name type="synonym">ND5</name>
</gene>
<comment type="function">
    <text evidence="1">Core subunit of the mitochondrial membrane respiratory chain NADH dehydrogenase (Complex I) that is believed to belong to the minimal assembly required for catalysis. Complex I functions in the transfer of electrons from NADH to the respiratory chain. The immediate electron acceptor for the enzyme is believed to be ubiquinone (By similarity).</text>
</comment>
<comment type="catalytic activity">
    <reaction>
        <text>a ubiquinone + NADH + 5 H(+)(in) = a ubiquinol + NAD(+) + 4 H(+)(out)</text>
        <dbReference type="Rhea" id="RHEA:29091"/>
        <dbReference type="Rhea" id="RHEA-COMP:9565"/>
        <dbReference type="Rhea" id="RHEA-COMP:9566"/>
        <dbReference type="ChEBI" id="CHEBI:15378"/>
        <dbReference type="ChEBI" id="CHEBI:16389"/>
        <dbReference type="ChEBI" id="CHEBI:17976"/>
        <dbReference type="ChEBI" id="CHEBI:57540"/>
        <dbReference type="ChEBI" id="CHEBI:57945"/>
        <dbReference type="EC" id="7.1.1.2"/>
    </reaction>
</comment>
<comment type="subcellular location">
    <subcellularLocation>
        <location evidence="1">Mitochondrion inner membrane</location>
        <topology evidence="1">Multi-pass membrane protein</topology>
    </subcellularLocation>
</comment>
<comment type="similarity">
    <text evidence="3">Belongs to the complex I subunit 5 family.</text>
</comment>
<geneLocation type="mitochondrion"/>
<organism>
    <name type="scientific">Latimeria chalumnae</name>
    <name type="common">Coelacanth</name>
    <dbReference type="NCBI Taxonomy" id="7897"/>
    <lineage>
        <taxon>Eukaryota</taxon>
        <taxon>Metazoa</taxon>
        <taxon>Chordata</taxon>
        <taxon>Craniata</taxon>
        <taxon>Vertebrata</taxon>
        <taxon>Euteleostomi</taxon>
        <taxon>Coelacanthiformes</taxon>
        <taxon>Coelacanthidae</taxon>
        <taxon>Latimeria</taxon>
    </lineage>
</organism>
<sequence>MYTTLIFNSTLMTMFTILTAPILTTLNPIKPNKKWTELWVKTAVQLAFFTSLIPLFIYLDQGIETITTNWQWMNTNTFNINISFKFDQYSIVFIPIALYVTWSILEFANWYMHQDPKMNQFFKYLLLFLITMMILVTANNMFQLFIGWEGVGIMSFLLIGWWHGRANANTAALQAVIYNRVGDIGLTLSMVWFAINLNTWEMQQMFIMSYNTDMTIPLLGLTLAAAGKSAQFGLHPWLPAAMEGPTPVSALLHSSTMVVAGIFLLIRLHPLMDNNKLILTTCLCLGALTTLFTAACALTQNDIKKIIAFSTSSQLGLMMVAIGLNQPQLAFLHICTHAFFKAMLFLCSGSIIHSLNDEQDIRKMGGLHNMLPTTSSCTMVSSMALTGMPFLAGFFSKDAIIESLNSSHLNAWALTTTLMATSFTAVYSLRIIYLVMMNYPRFQSLSPIDENYTKTRNPIKRLAWGSVIAGMMIFLNILPTKSQTMTMPTHMKTAAIMVTILGVLTAMELTKLTSTQLKITPNVNMHNSSNMLGYFPNIIHRLLPQTNLYLGQKMATHLTDQTWFEKIGPKGILALQIPTTKMINNSQQGLIKTYLTLFFLTTVLFTTMTMI</sequence>